<sequence length="101" mass="11334">MAKTSMKAREAKRAQLVAKFAEKRAALKAIIASPASSDEDRWDAVLKLQALPRDSSASRQRNRCNQTGRPHGFLRKFGLSRIKLREATMRGEVPGLRKASW</sequence>
<proteinExistence type="inferred from homology"/>
<reference key="1">
    <citation type="submission" date="2006-09" db="EMBL/GenBank/DDBJ databases">
        <title>Complete sequence of chromosome 1 of Shewanella sp. ANA-3.</title>
        <authorList>
            <person name="Copeland A."/>
            <person name="Lucas S."/>
            <person name="Lapidus A."/>
            <person name="Barry K."/>
            <person name="Detter J.C."/>
            <person name="Glavina del Rio T."/>
            <person name="Hammon N."/>
            <person name="Israni S."/>
            <person name="Dalin E."/>
            <person name="Tice H."/>
            <person name="Pitluck S."/>
            <person name="Chertkov O."/>
            <person name="Brettin T."/>
            <person name="Bruce D."/>
            <person name="Han C."/>
            <person name="Tapia R."/>
            <person name="Gilna P."/>
            <person name="Schmutz J."/>
            <person name="Larimer F."/>
            <person name="Land M."/>
            <person name="Hauser L."/>
            <person name="Kyrpides N."/>
            <person name="Kim E."/>
            <person name="Newman D."/>
            <person name="Salticov C."/>
            <person name="Konstantinidis K."/>
            <person name="Klappenback J."/>
            <person name="Tiedje J."/>
            <person name="Richardson P."/>
        </authorList>
    </citation>
    <scope>NUCLEOTIDE SEQUENCE [LARGE SCALE GENOMIC DNA]</scope>
    <source>
        <strain>ANA-3</strain>
    </source>
</reference>
<feature type="chain" id="PRO_1000128581" description="Small ribosomal subunit protein uS14">
    <location>
        <begin position="1"/>
        <end position="101"/>
    </location>
</feature>
<name>RS14_SHESA</name>
<keyword id="KW-0687">Ribonucleoprotein</keyword>
<keyword id="KW-0689">Ribosomal protein</keyword>
<keyword id="KW-0694">RNA-binding</keyword>
<keyword id="KW-0699">rRNA-binding</keyword>
<dbReference type="EMBL" id="CP000469">
    <property type="protein sequence ID" value="ABK46456.1"/>
    <property type="molecule type" value="Genomic_DNA"/>
</dbReference>
<dbReference type="RefSeq" id="WP_011715465.1">
    <property type="nucleotide sequence ID" value="NC_008577.1"/>
</dbReference>
<dbReference type="SMR" id="A0KRN7"/>
<dbReference type="STRING" id="94122.Shewana3_0212"/>
<dbReference type="KEGG" id="shn:Shewana3_0212"/>
<dbReference type="eggNOG" id="COG0199">
    <property type="taxonomic scope" value="Bacteria"/>
</dbReference>
<dbReference type="HOGENOM" id="CLU_139869_0_1_6"/>
<dbReference type="OrthoDB" id="9810484at2"/>
<dbReference type="Proteomes" id="UP000002589">
    <property type="component" value="Chromosome"/>
</dbReference>
<dbReference type="GO" id="GO:0005737">
    <property type="term" value="C:cytoplasm"/>
    <property type="evidence" value="ECO:0007669"/>
    <property type="project" value="UniProtKB-ARBA"/>
</dbReference>
<dbReference type="GO" id="GO:0015935">
    <property type="term" value="C:small ribosomal subunit"/>
    <property type="evidence" value="ECO:0007669"/>
    <property type="project" value="TreeGrafter"/>
</dbReference>
<dbReference type="GO" id="GO:0019843">
    <property type="term" value="F:rRNA binding"/>
    <property type="evidence" value="ECO:0007669"/>
    <property type="project" value="UniProtKB-UniRule"/>
</dbReference>
<dbReference type="GO" id="GO:0003735">
    <property type="term" value="F:structural constituent of ribosome"/>
    <property type="evidence" value="ECO:0007669"/>
    <property type="project" value="InterPro"/>
</dbReference>
<dbReference type="GO" id="GO:0006412">
    <property type="term" value="P:translation"/>
    <property type="evidence" value="ECO:0007669"/>
    <property type="project" value="UniProtKB-UniRule"/>
</dbReference>
<dbReference type="FunFam" id="1.10.287.1480:FF:000001">
    <property type="entry name" value="30S ribosomal protein S14"/>
    <property type="match status" value="1"/>
</dbReference>
<dbReference type="Gene3D" id="1.10.287.1480">
    <property type="match status" value="1"/>
</dbReference>
<dbReference type="HAMAP" id="MF_00537">
    <property type="entry name" value="Ribosomal_uS14_1"/>
    <property type="match status" value="1"/>
</dbReference>
<dbReference type="InterPro" id="IPR001209">
    <property type="entry name" value="Ribosomal_uS14"/>
</dbReference>
<dbReference type="InterPro" id="IPR023036">
    <property type="entry name" value="Ribosomal_uS14_bac/plastid"/>
</dbReference>
<dbReference type="InterPro" id="IPR018271">
    <property type="entry name" value="Ribosomal_uS14_CS"/>
</dbReference>
<dbReference type="NCBIfam" id="NF006477">
    <property type="entry name" value="PRK08881.1"/>
    <property type="match status" value="1"/>
</dbReference>
<dbReference type="PANTHER" id="PTHR19836">
    <property type="entry name" value="30S RIBOSOMAL PROTEIN S14"/>
    <property type="match status" value="1"/>
</dbReference>
<dbReference type="PANTHER" id="PTHR19836:SF19">
    <property type="entry name" value="SMALL RIBOSOMAL SUBUNIT PROTEIN US14M"/>
    <property type="match status" value="1"/>
</dbReference>
<dbReference type="Pfam" id="PF00253">
    <property type="entry name" value="Ribosomal_S14"/>
    <property type="match status" value="1"/>
</dbReference>
<dbReference type="SUPFAM" id="SSF57716">
    <property type="entry name" value="Glucocorticoid receptor-like (DNA-binding domain)"/>
    <property type="match status" value="1"/>
</dbReference>
<dbReference type="PROSITE" id="PS00527">
    <property type="entry name" value="RIBOSOMAL_S14"/>
    <property type="match status" value="1"/>
</dbReference>
<protein>
    <recommendedName>
        <fullName evidence="1">Small ribosomal subunit protein uS14</fullName>
    </recommendedName>
    <alternativeName>
        <fullName evidence="2">30S ribosomal protein S14</fullName>
    </alternativeName>
</protein>
<comment type="function">
    <text evidence="1">Binds 16S rRNA, required for the assembly of 30S particles and may also be responsible for determining the conformation of the 16S rRNA at the A site.</text>
</comment>
<comment type="subunit">
    <text evidence="1">Part of the 30S ribosomal subunit. Contacts proteins S3 and S10.</text>
</comment>
<comment type="similarity">
    <text evidence="1">Belongs to the universal ribosomal protein uS14 family.</text>
</comment>
<evidence type="ECO:0000255" key="1">
    <source>
        <dbReference type="HAMAP-Rule" id="MF_00537"/>
    </source>
</evidence>
<evidence type="ECO:0000305" key="2"/>
<organism>
    <name type="scientific">Shewanella sp. (strain ANA-3)</name>
    <dbReference type="NCBI Taxonomy" id="94122"/>
    <lineage>
        <taxon>Bacteria</taxon>
        <taxon>Pseudomonadati</taxon>
        <taxon>Pseudomonadota</taxon>
        <taxon>Gammaproteobacteria</taxon>
        <taxon>Alteromonadales</taxon>
        <taxon>Shewanellaceae</taxon>
        <taxon>Shewanella</taxon>
    </lineage>
</organism>
<gene>
    <name evidence="1" type="primary">rpsN</name>
    <name type="ordered locus">Shewana3_0212</name>
</gene>
<accession>A0KRN7</accession>